<reference key="1">
    <citation type="submission" date="2006-08" db="EMBL/GenBank/DDBJ databases">
        <title>Complete sequence of chromosome 1 of Shewanella sp. MR-7.</title>
        <authorList>
            <person name="Copeland A."/>
            <person name="Lucas S."/>
            <person name="Lapidus A."/>
            <person name="Barry K."/>
            <person name="Detter J.C."/>
            <person name="Glavina del Rio T."/>
            <person name="Hammon N."/>
            <person name="Israni S."/>
            <person name="Dalin E."/>
            <person name="Tice H."/>
            <person name="Pitluck S."/>
            <person name="Kiss H."/>
            <person name="Brettin T."/>
            <person name="Bruce D."/>
            <person name="Han C."/>
            <person name="Tapia R."/>
            <person name="Gilna P."/>
            <person name="Schmutz J."/>
            <person name="Larimer F."/>
            <person name="Land M."/>
            <person name="Hauser L."/>
            <person name="Kyrpides N."/>
            <person name="Mikhailova N."/>
            <person name="Nealson K."/>
            <person name="Konstantinidis K."/>
            <person name="Klappenbach J."/>
            <person name="Tiedje J."/>
            <person name="Richardson P."/>
        </authorList>
    </citation>
    <scope>NUCLEOTIDE SEQUENCE [LARGE SCALE GENOMIC DNA]</scope>
    <source>
        <strain>MR-7</strain>
    </source>
</reference>
<feature type="chain" id="PRO_1000053112" description="Large ribosomal subunit protein uL18">
    <location>
        <begin position="1"/>
        <end position="116"/>
    </location>
</feature>
<gene>
    <name evidence="1" type="primary">rplR</name>
    <name type="ordered locus">Shewmr7_0210</name>
</gene>
<protein>
    <recommendedName>
        <fullName evidence="1">Large ribosomal subunit protein uL18</fullName>
    </recommendedName>
    <alternativeName>
        <fullName evidence="2">50S ribosomal protein L18</fullName>
    </alternativeName>
</protein>
<keyword id="KW-0687">Ribonucleoprotein</keyword>
<keyword id="KW-0689">Ribosomal protein</keyword>
<keyword id="KW-0694">RNA-binding</keyword>
<keyword id="KW-0699">rRNA-binding</keyword>
<evidence type="ECO:0000255" key="1">
    <source>
        <dbReference type="HAMAP-Rule" id="MF_01337"/>
    </source>
</evidence>
<evidence type="ECO:0000305" key="2"/>
<sequence length="116" mass="12696">MDKKTSRLRRAIRARKKIQELGVNRLVVHRTPRHIYAQVINPEAQVVAAASTVEKAVKEQLKSTGNVDAAKAVGKFVAERAIEKGVTSVAFDRSGFKYHGRVAALADAAREAGLQF</sequence>
<accession>Q0I089</accession>
<comment type="function">
    <text evidence="1">This is one of the proteins that bind and probably mediate the attachment of the 5S RNA into the large ribosomal subunit, where it forms part of the central protuberance.</text>
</comment>
<comment type="subunit">
    <text evidence="1">Part of the 50S ribosomal subunit; part of the 5S rRNA/L5/L18/L25 subcomplex. Contacts the 5S and 23S rRNAs.</text>
</comment>
<comment type="similarity">
    <text evidence="1">Belongs to the universal ribosomal protein uL18 family.</text>
</comment>
<dbReference type="EMBL" id="CP000444">
    <property type="protein sequence ID" value="ABI41216.1"/>
    <property type="molecule type" value="Genomic_DNA"/>
</dbReference>
<dbReference type="SMR" id="Q0I089"/>
<dbReference type="KEGG" id="shm:Shewmr7_0210"/>
<dbReference type="HOGENOM" id="CLU_098841_0_1_6"/>
<dbReference type="GO" id="GO:0022625">
    <property type="term" value="C:cytosolic large ribosomal subunit"/>
    <property type="evidence" value="ECO:0007669"/>
    <property type="project" value="TreeGrafter"/>
</dbReference>
<dbReference type="GO" id="GO:0008097">
    <property type="term" value="F:5S rRNA binding"/>
    <property type="evidence" value="ECO:0007669"/>
    <property type="project" value="TreeGrafter"/>
</dbReference>
<dbReference type="GO" id="GO:0003735">
    <property type="term" value="F:structural constituent of ribosome"/>
    <property type="evidence" value="ECO:0007669"/>
    <property type="project" value="InterPro"/>
</dbReference>
<dbReference type="GO" id="GO:0006412">
    <property type="term" value="P:translation"/>
    <property type="evidence" value="ECO:0007669"/>
    <property type="project" value="UniProtKB-UniRule"/>
</dbReference>
<dbReference type="CDD" id="cd00432">
    <property type="entry name" value="Ribosomal_L18_L5e"/>
    <property type="match status" value="1"/>
</dbReference>
<dbReference type="FunFam" id="3.30.420.100:FF:000001">
    <property type="entry name" value="50S ribosomal protein L18"/>
    <property type="match status" value="1"/>
</dbReference>
<dbReference type="Gene3D" id="3.30.420.100">
    <property type="match status" value="1"/>
</dbReference>
<dbReference type="HAMAP" id="MF_01337_B">
    <property type="entry name" value="Ribosomal_uL18_B"/>
    <property type="match status" value="1"/>
</dbReference>
<dbReference type="InterPro" id="IPR004389">
    <property type="entry name" value="Ribosomal_uL18_bac-type"/>
</dbReference>
<dbReference type="InterPro" id="IPR005484">
    <property type="entry name" value="Ribosomal_uL18_bac/euk"/>
</dbReference>
<dbReference type="NCBIfam" id="TIGR00060">
    <property type="entry name" value="L18_bact"/>
    <property type="match status" value="1"/>
</dbReference>
<dbReference type="PANTHER" id="PTHR12899">
    <property type="entry name" value="39S RIBOSOMAL PROTEIN L18, MITOCHONDRIAL"/>
    <property type="match status" value="1"/>
</dbReference>
<dbReference type="PANTHER" id="PTHR12899:SF3">
    <property type="entry name" value="LARGE RIBOSOMAL SUBUNIT PROTEIN UL18M"/>
    <property type="match status" value="1"/>
</dbReference>
<dbReference type="Pfam" id="PF00861">
    <property type="entry name" value="Ribosomal_L18p"/>
    <property type="match status" value="1"/>
</dbReference>
<dbReference type="SUPFAM" id="SSF53137">
    <property type="entry name" value="Translational machinery components"/>
    <property type="match status" value="1"/>
</dbReference>
<name>RL18_SHESR</name>
<organism>
    <name type="scientific">Shewanella sp. (strain MR-7)</name>
    <dbReference type="NCBI Taxonomy" id="60481"/>
    <lineage>
        <taxon>Bacteria</taxon>
        <taxon>Pseudomonadati</taxon>
        <taxon>Pseudomonadota</taxon>
        <taxon>Gammaproteobacteria</taxon>
        <taxon>Alteromonadales</taxon>
        <taxon>Shewanellaceae</taxon>
        <taxon>Shewanella</taxon>
    </lineage>
</organism>
<proteinExistence type="inferred from homology"/>